<protein>
    <recommendedName>
        <fullName>Putative ABC transporter C family member 15</fullName>
        <shortName>ABC transporter ABCC.15</shortName>
        <shortName>AtABCC15</shortName>
        <ecNumber>7.6.2.2</ecNumber>
    </recommendedName>
    <alternativeName>
        <fullName>ATP-energized glutathione S-conjugate pump 15</fullName>
    </alternativeName>
    <alternativeName>
        <fullName>Glutathione S-conjugate-transporting ATPase 15</fullName>
    </alternativeName>
    <alternativeName>
        <fullName>Putative multidrug resistance-associated protein 15</fullName>
    </alternativeName>
</protein>
<organism>
    <name type="scientific">Arabidopsis thaliana</name>
    <name type="common">Mouse-ear cress</name>
    <dbReference type="NCBI Taxonomy" id="3702"/>
    <lineage>
        <taxon>Eukaryota</taxon>
        <taxon>Viridiplantae</taxon>
        <taxon>Streptophyta</taxon>
        <taxon>Embryophyta</taxon>
        <taxon>Tracheophyta</taxon>
        <taxon>Spermatophyta</taxon>
        <taxon>Magnoliopsida</taxon>
        <taxon>eudicotyledons</taxon>
        <taxon>Gunneridae</taxon>
        <taxon>Pentapetalae</taxon>
        <taxon>rosids</taxon>
        <taxon>malvids</taxon>
        <taxon>Brassicales</taxon>
        <taxon>Brassicaceae</taxon>
        <taxon>Camelineae</taxon>
        <taxon>Arabidopsis</taxon>
    </lineage>
</organism>
<accession>Q7FB56</accession>
<accession>F4JD20</accession>
<proteinExistence type="uncertain"/>
<feature type="chain" id="PRO_0000226086" description="Putative ABC transporter C family member 15">
    <location>
        <begin position="1"/>
        <end position="1053"/>
    </location>
</feature>
<feature type="transmembrane region" description="Helical" evidence="3">
    <location>
        <begin position="11"/>
        <end position="31"/>
    </location>
</feature>
<feature type="transmembrane region" description="Helical" evidence="3">
    <location>
        <begin position="36"/>
        <end position="56"/>
    </location>
</feature>
<feature type="transmembrane region" description="Helical" evidence="3">
    <location>
        <begin position="125"/>
        <end position="145"/>
    </location>
</feature>
<feature type="transmembrane region" description="Helical" evidence="3">
    <location>
        <begin position="151"/>
        <end position="171"/>
    </location>
</feature>
<feature type="transmembrane region" description="Helical" evidence="3">
    <location>
        <begin position="481"/>
        <end position="503"/>
    </location>
</feature>
<feature type="transmembrane region" description="Helical" evidence="3">
    <location>
        <begin position="523"/>
        <end position="543"/>
    </location>
</feature>
<feature type="transmembrane region" description="Helical" evidence="3">
    <location>
        <begin position="595"/>
        <end position="615"/>
    </location>
</feature>
<feature type="transmembrane region" description="Helical" evidence="3">
    <location>
        <begin position="714"/>
        <end position="734"/>
    </location>
</feature>
<feature type="transmembrane region" description="Helical" evidence="3">
    <location>
        <begin position="738"/>
        <end position="758"/>
    </location>
</feature>
<feature type="domain" description="ABC transmembrane type-1 1" evidence="3">
    <location>
        <begin position="1"/>
        <end position="180"/>
    </location>
</feature>
<feature type="domain" description="ABC transporter 1" evidence="2">
    <location>
        <begin position="214"/>
        <end position="437"/>
    </location>
</feature>
<feature type="domain" description="ABC transmembrane type-1 2" evidence="3">
    <location>
        <begin position="483"/>
        <end position="765"/>
    </location>
</feature>
<feature type="domain" description="ABC transporter 2" evidence="2">
    <location>
        <begin position="804"/>
        <end position="1036"/>
    </location>
</feature>
<feature type="binding site" evidence="2">
    <location>
        <begin position="249"/>
        <end position="256"/>
    </location>
    <ligand>
        <name>ATP</name>
        <dbReference type="ChEBI" id="CHEBI:30616"/>
        <label>1</label>
    </ligand>
</feature>
<feature type="binding site" evidence="2">
    <location>
        <begin position="836"/>
        <end position="843"/>
    </location>
    <ligand>
        <name>ATP</name>
        <dbReference type="ChEBI" id="CHEBI:30616"/>
        <label>2</label>
    </ligand>
</feature>
<sequence>MSVDVQRITDFIWYVNSIWMLPIQIFSAIYILQKHLGLGALAALVTTLMVMACNYPLTRLQRNYQSDIMNAKDDRMKATSEILKNMKILKLQAWDNQFLNKVKTLRKKEYDCLWKSLRLQDFTTFILWGAPSLISVVTFVTCMLMGVKLTAGAVLSALATFQMLQSPIFGLPDLLSALVQSKVSADRIASYLQQSETQKDAVEYCSNDHTEFSVEIENGAFSWEPESSRPTLDDIELKVKSGMKVAICGAVGSGKSSLPSSILGEIQKLKGTVRVSGKQAYVPQSPWILSGTIRDNILFGSIYESEKYERTVKACALIKDFELFSNGDLTEIGERGINMSGGQKQRIQIARAVYQNADIYLLDDPFSAVDAHTGRELFEDCLMGILKDKTVLYVTHQVEFLPAADLILVMQNGRVMQAGKFEELLKQNIGFEVLTQCDSEHNISTENKKKEAKLVQDEETEKGVIGKEVYLTYLTTVKGGLLVPFIILAQSCFQMLQIASNYWMAWTAPPTAESIPKLGMGRILLVYALLAAGSSLCVLARTILVAIGGLSTAETFFSRMLCSIFRAPMSYFDSTPTGRILNRASTDQSVLDLEMAVKLGWCAFSIIQIVGTIFVMSQVAWQVCVIFIPVAVACVFYQRYYTPTERELSRMSGVERAPILHHFAESLAGATTIRAFDQRDRFISSNLVLIDSHSRPWFHVASAMEWLSFRLNLLSHFVFAFSLVLLVTLPEGVINPSIAGLGVTYGLSLNVLQATVIWNICNAENKMISVERILQHSKIPSEAPLVIDDQRPLDNWPNVGSIVFRDLQVRYAEHFPAVLKNITCAFPGGKKIGVVGRTGSGKSTLIQALFRIVEPSHGTIVIDNVDITKIGLHDLRSRLGIIPQDNALFDGTIRLNLDPLAQYTDREIWEALDKCQLGDVIRAKDEKLDATVVENGENWSVGQRQLVCLGRVLLKKSNILVLDEATASVDSATDGVIQKIINQEFKDRTVVTIAHRIHTVIESDLVLVLSDGRIAEFDSPAKLLQREDSFFSKLIKEYSLRSNHFAGSNDLLS</sequence>
<gene>
    <name type="primary">ABCC15</name>
    <name type="synonym">MRP15</name>
    <name type="ordered locus">At3g60970</name>
    <name type="ORF">T27I15.60</name>
</gene>
<reference key="1">
    <citation type="journal article" date="2000" name="Nature">
        <title>Sequence and analysis of chromosome 3 of the plant Arabidopsis thaliana.</title>
        <authorList>
            <person name="Salanoubat M."/>
            <person name="Lemcke K."/>
            <person name="Rieger M."/>
            <person name="Ansorge W."/>
            <person name="Unseld M."/>
            <person name="Fartmann B."/>
            <person name="Valle G."/>
            <person name="Bloecker H."/>
            <person name="Perez-Alonso M."/>
            <person name="Obermaier B."/>
            <person name="Delseny M."/>
            <person name="Boutry M."/>
            <person name="Grivell L.A."/>
            <person name="Mache R."/>
            <person name="Puigdomenech P."/>
            <person name="De Simone V."/>
            <person name="Choisne N."/>
            <person name="Artiguenave F."/>
            <person name="Robert C."/>
            <person name="Brottier P."/>
            <person name="Wincker P."/>
            <person name="Cattolico L."/>
            <person name="Weissenbach J."/>
            <person name="Saurin W."/>
            <person name="Quetier F."/>
            <person name="Schaefer M."/>
            <person name="Mueller-Auer S."/>
            <person name="Gabel C."/>
            <person name="Fuchs M."/>
            <person name="Benes V."/>
            <person name="Wurmbach E."/>
            <person name="Drzonek H."/>
            <person name="Erfle H."/>
            <person name="Jordan N."/>
            <person name="Bangert S."/>
            <person name="Wiedelmann R."/>
            <person name="Kranz H."/>
            <person name="Voss H."/>
            <person name="Holland R."/>
            <person name="Brandt P."/>
            <person name="Nyakatura G."/>
            <person name="Vezzi A."/>
            <person name="D'Angelo M."/>
            <person name="Pallavicini A."/>
            <person name="Toppo S."/>
            <person name="Simionati B."/>
            <person name="Conrad A."/>
            <person name="Hornischer K."/>
            <person name="Kauer G."/>
            <person name="Loehnert T.-H."/>
            <person name="Nordsiek G."/>
            <person name="Reichelt J."/>
            <person name="Scharfe M."/>
            <person name="Schoen O."/>
            <person name="Bargues M."/>
            <person name="Terol J."/>
            <person name="Climent J."/>
            <person name="Navarro P."/>
            <person name="Collado C."/>
            <person name="Perez-Perez A."/>
            <person name="Ottenwaelder B."/>
            <person name="Duchemin D."/>
            <person name="Cooke R."/>
            <person name="Laudie M."/>
            <person name="Berger-Llauro C."/>
            <person name="Purnelle B."/>
            <person name="Masuy D."/>
            <person name="de Haan M."/>
            <person name="Maarse A.C."/>
            <person name="Alcaraz J.-P."/>
            <person name="Cottet A."/>
            <person name="Casacuberta E."/>
            <person name="Monfort A."/>
            <person name="Argiriou A."/>
            <person name="Flores M."/>
            <person name="Liguori R."/>
            <person name="Vitale D."/>
            <person name="Mannhaupt G."/>
            <person name="Haase D."/>
            <person name="Schoof H."/>
            <person name="Rudd S."/>
            <person name="Zaccaria P."/>
            <person name="Mewes H.-W."/>
            <person name="Mayer K.F.X."/>
            <person name="Kaul S."/>
            <person name="Town C.D."/>
            <person name="Koo H.L."/>
            <person name="Tallon L.J."/>
            <person name="Jenkins J."/>
            <person name="Rooney T."/>
            <person name="Rizzo M."/>
            <person name="Walts A."/>
            <person name="Utterback T."/>
            <person name="Fujii C.Y."/>
            <person name="Shea T.P."/>
            <person name="Creasy T.H."/>
            <person name="Haas B."/>
            <person name="Maiti R."/>
            <person name="Wu D."/>
            <person name="Peterson J."/>
            <person name="Van Aken S."/>
            <person name="Pai G."/>
            <person name="Militscher J."/>
            <person name="Sellers P."/>
            <person name="Gill J.E."/>
            <person name="Feldblyum T.V."/>
            <person name="Preuss D."/>
            <person name="Lin X."/>
            <person name="Nierman W.C."/>
            <person name="Salzberg S.L."/>
            <person name="White O."/>
            <person name="Venter J.C."/>
            <person name="Fraser C.M."/>
            <person name="Kaneko T."/>
            <person name="Nakamura Y."/>
            <person name="Sato S."/>
            <person name="Kato T."/>
            <person name="Asamizu E."/>
            <person name="Sasamoto S."/>
            <person name="Kimura T."/>
            <person name="Idesawa K."/>
            <person name="Kawashima K."/>
            <person name="Kishida Y."/>
            <person name="Kiyokawa C."/>
            <person name="Kohara M."/>
            <person name="Matsumoto M."/>
            <person name="Matsuno A."/>
            <person name="Muraki A."/>
            <person name="Nakayama S."/>
            <person name="Nakazaki N."/>
            <person name="Shinpo S."/>
            <person name="Takeuchi C."/>
            <person name="Wada T."/>
            <person name="Watanabe A."/>
            <person name="Yamada M."/>
            <person name="Yasuda M."/>
            <person name="Tabata S."/>
        </authorList>
    </citation>
    <scope>NUCLEOTIDE SEQUENCE [LARGE SCALE GENOMIC DNA]</scope>
    <source>
        <strain>cv. Columbia</strain>
    </source>
</reference>
<reference key="2">
    <citation type="journal article" date="2017" name="Plant J.">
        <title>Araport11: a complete reannotation of the Arabidopsis thaliana reference genome.</title>
        <authorList>
            <person name="Cheng C.Y."/>
            <person name="Krishnakumar V."/>
            <person name="Chan A.P."/>
            <person name="Thibaud-Nissen F."/>
            <person name="Schobel S."/>
            <person name="Town C.D."/>
        </authorList>
    </citation>
    <scope>GENOME REANNOTATION</scope>
    <source>
        <strain>cv. Columbia</strain>
    </source>
</reference>
<reference key="3">
    <citation type="journal article" date="2001" name="J. Biol. Chem.">
        <title>The Arabidopsis thaliana ABC protein superfamily, a complete inventory.</title>
        <authorList>
            <person name="Sanchez-Fernandez R."/>
            <person name="Davies T.G."/>
            <person name="Coleman J.O."/>
            <person name="Rea P.A."/>
        </authorList>
    </citation>
    <scope>GENE FAMILY</scope>
    <scope>NOMENCLATURE</scope>
</reference>
<reference key="4">
    <citation type="journal article" date="2002" name="Planta">
        <title>Multifunctionality of plant ABC transporters -- more than just detoxifiers.</title>
        <authorList>
            <person name="Martinoia E."/>
            <person name="Klein M."/>
            <person name="Geisler M."/>
            <person name="Bovet L."/>
            <person name="Forestier C."/>
            <person name="Kolukisaoglu H.U."/>
            <person name="Mueller-Roeber B."/>
            <person name="Schulz B."/>
        </authorList>
    </citation>
    <scope>GENE FAMILY</scope>
</reference>
<reference key="5">
    <citation type="journal article" date="2008" name="Trends Plant Sci.">
        <title>Plant ABC proteins - a unified nomenclature and updated inventory.</title>
        <authorList>
            <person name="Verrier P.J."/>
            <person name="Bird D."/>
            <person name="Burla B."/>
            <person name="Dassa E."/>
            <person name="Forestier C."/>
            <person name="Geisler M."/>
            <person name="Klein M."/>
            <person name="Kolukisaoglu H.U."/>
            <person name="Lee Y."/>
            <person name="Martinoia E."/>
            <person name="Murphy A."/>
            <person name="Rea P.A."/>
            <person name="Samuels L."/>
            <person name="Schulz B."/>
            <person name="Spalding E.J."/>
            <person name="Yazaki K."/>
            <person name="Theodoulou F.L."/>
        </authorList>
    </citation>
    <scope>GENE FAMILY</scope>
    <scope>NOMENCLATURE</scope>
</reference>
<comment type="function">
    <text evidence="1">Pump for glutathione S-conjugates.</text>
</comment>
<comment type="catalytic activity">
    <reaction>
        <text>ATP + H2O + xenobioticSide 1 = ADP + phosphate + xenobioticSide 2.</text>
        <dbReference type="EC" id="7.6.2.2"/>
    </reaction>
</comment>
<comment type="subcellular location">
    <subcellularLocation>
        <location evidence="3">Membrane</location>
        <topology evidence="3">Multi-pass membrane protein</topology>
    </subcellularLocation>
</comment>
<comment type="similarity">
    <text evidence="4">Belongs to the ABC transporter superfamily. ABCC family. Conjugate transporter (TC 3.A.1.208) subfamily.</text>
</comment>
<comment type="caution">
    <text evidence="4">Lacks some conserved transmembrane domains, which are one of the features of the ABC conjugate transporter subfamily.</text>
</comment>
<comment type="caution">
    <text evidence="4">Could be the product of a pseudogene.</text>
</comment>
<comment type="sequence caution" evidence="4">
    <conflict type="erroneous gene model prediction">
        <sequence resource="EMBL-CDS" id="CAB94133"/>
    </conflict>
</comment>
<keyword id="KW-0067">ATP-binding</keyword>
<keyword id="KW-0472">Membrane</keyword>
<keyword id="KW-0547">Nucleotide-binding</keyword>
<keyword id="KW-1185">Reference proteome</keyword>
<keyword id="KW-0677">Repeat</keyword>
<keyword id="KW-1278">Translocase</keyword>
<keyword id="KW-0812">Transmembrane</keyword>
<keyword id="KW-1133">Transmembrane helix</keyword>
<keyword id="KW-0813">Transport</keyword>
<dbReference type="EC" id="7.6.2.2"/>
<dbReference type="EMBL" id="AL358732">
    <property type="protein sequence ID" value="CAB94133.1"/>
    <property type="status" value="ALT_SEQ"/>
    <property type="molecule type" value="Genomic_DNA"/>
</dbReference>
<dbReference type="EMBL" id="CP002686">
    <property type="protein sequence ID" value="AEE80133.1"/>
    <property type="molecule type" value="Genomic_DNA"/>
</dbReference>
<dbReference type="PIR" id="T50518">
    <property type="entry name" value="T50518"/>
</dbReference>
<dbReference type="RefSeq" id="NP_191656.2">
    <property type="nucleotide sequence ID" value="NM_115961.3"/>
</dbReference>
<dbReference type="SMR" id="Q7FB56"/>
<dbReference type="STRING" id="3702.Q7FB56"/>
<dbReference type="PaxDb" id="3702-AT3G60970.1"/>
<dbReference type="ProteomicsDB" id="243297"/>
<dbReference type="EnsemblPlants" id="AT3G60970.1">
    <property type="protein sequence ID" value="AT3G60970.1"/>
    <property type="gene ID" value="AT3G60970"/>
</dbReference>
<dbReference type="GeneID" id="825269"/>
<dbReference type="Gramene" id="AT3G60970.1">
    <property type="protein sequence ID" value="AT3G60970.1"/>
    <property type="gene ID" value="AT3G60970"/>
</dbReference>
<dbReference type="KEGG" id="ath:AT3G60970"/>
<dbReference type="Araport" id="AT3G60970"/>
<dbReference type="TAIR" id="AT3G60970">
    <property type="gene designation" value="ABCC15"/>
</dbReference>
<dbReference type="eggNOG" id="KOG0054">
    <property type="taxonomic scope" value="Eukaryota"/>
</dbReference>
<dbReference type="HOGENOM" id="CLU_000604_27_0_1"/>
<dbReference type="InParanoid" id="Q7FB56"/>
<dbReference type="OMA" id="RIVEPSH"/>
<dbReference type="BioCyc" id="ARA:AT3G60970-MONOMER"/>
<dbReference type="Proteomes" id="UP000006548">
    <property type="component" value="Chromosome 3"/>
</dbReference>
<dbReference type="ExpressionAtlas" id="Q7FB56">
    <property type="expression patterns" value="baseline and differential"/>
</dbReference>
<dbReference type="GO" id="GO:0016020">
    <property type="term" value="C:membrane"/>
    <property type="evidence" value="ECO:0007669"/>
    <property type="project" value="UniProtKB-SubCell"/>
</dbReference>
<dbReference type="GO" id="GO:0008559">
    <property type="term" value="F:ABC-type xenobiotic transporter activity"/>
    <property type="evidence" value="ECO:0007669"/>
    <property type="project" value="UniProtKB-EC"/>
</dbReference>
<dbReference type="GO" id="GO:0005524">
    <property type="term" value="F:ATP binding"/>
    <property type="evidence" value="ECO:0007669"/>
    <property type="project" value="UniProtKB-KW"/>
</dbReference>
<dbReference type="GO" id="GO:0016887">
    <property type="term" value="F:ATP hydrolysis activity"/>
    <property type="evidence" value="ECO:0007669"/>
    <property type="project" value="InterPro"/>
</dbReference>
<dbReference type="GO" id="GO:0042626">
    <property type="term" value="F:ATPase-coupled transmembrane transporter activity"/>
    <property type="evidence" value="ECO:0000250"/>
    <property type="project" value="TAIR"/>
</dbReference>
<dbReference type="CDD" id="cd18579">
    <property type="entry name" value="ABC_6TM_ABCC_D1"/>
    <property type="match status" value="1"/>
</dbReference>
<dbReference type="CDD" id="cd18580">
    <property type="entry name" value="ABC_6TM_ABCC_D2"/>
    <property type="match status" value="1"/>
</dbReference>
<dbReference type="CDD" id="cd03250">
    <property type="entry name" value="ABCC_MRP_domain1"/>
    <property type="match status" value="1"/>
</dbReference>
<dbReference type="CDD" id="cd03244">
    <property type="entry name" value="ABCC_MRP_domain2"/>
    <property type="match status" value="1"/>
</dbReference>
<dbReference type="FunFam" id="1.20.1560.10:FF:000003">
    <property type="entry name" value="ABC transporter C family member 10"/>
    <property type="match status" value="1"/>
</dbReference>
<dbReference type="FunFam" id="3.40.50.300:FF:000169">
    <property type="entry name" value="ABC transporter C family member 3"/>
    <property type="match status" value="1"/>
</dbReference>
<dbReference type="FunFam" id="1.20.1560.10:FF:000002">
    <property type="entry name" value="ABC transporter C family member 5"/>
    <property type="match status" value="1"/>
</dbReference>
<dbReference type="FunFam" id="3.40.50.300:FF:000508">
    <property type="entry name" value="ABC transporter C family member 5"/>
    <property type="match status" value="1"/>
</dbReference>
<dbReference type="Gene3D" id="1.20.1560.10">
    <property type="entry name" value="ABC transporter type 1, transmembrane domain"/>
    <property type="match status" value="2"/>
</dbReference>
<dbReference type="Gene3D" id="3.40.50.300">
    <property type="entry name" value="P-loop containing nucleotide triphosphate hydrolases"/>
    <property type="match status" value="2"/>
</dbReference>
<dbReference type="InterPro" id="IPR003593">
    <property type="entry name" value="AAA+_ATPase"/>
</dbReference>
<dbReference type="InterPro" id="IPR011527">
    <property type="entry name" value="ABC1_TM_dom"/>
</dbReference>
<dbReference type="InterPro" id="IPR036640">
    <property type="entry name" value="ABC1_TM_sf"/>
</dbReference>
<dbReference type="InterPro" id="IPR003439">
    <property type="entry name" value="ABC_transporter-like_ATP-bd"/>
</dbReference>
<dbReference type="InterPro" id="IPR017871">
    <property type="entry name" value="ABC_transporter-like_CS"/>
</dbReference>
<dbReference type="InterPro" id="IPR050173">
    <property type="entry name" value="ABC_transporter_C-like"/>
</dbReference>
<dbReference type="InterPro" id="IPR044746">
    <property type="entry name" value="ABCC_6TM_D1"/>
</dbReference>
<dbReference type="InterPro" id="IPR044726">
    <property type="entry name" value="ABCC_6TM_D2"/>
</dbReference>
<dbReference type="InterPro" id="IPR027417">
    <property type="entry name" value="P-loop_NTPase"/>
</dbReference>
<dbReference type="PANTHER" id="PTHR24223:SF165">
    <property type="entry name" value="ABC TRANSPORTER C FAMILY MEMBER 15-RELATED"/>
    <property type="match status" value="1"/>
</dbReference>
<dbReference type="PANTHER" id="PTHR24223">
    <property type="entry name" value="ATP-BINDING CASSETTE SUB-FAMILY C"/>
    <property type="match status" value="1"/>
</dbReference>
<dbReference type="Pfam" id="PF00664">
    <property type="entry name" value="ABC_membrane"/>
    <property type="match status" value="2"/>
</dbReference>
<dbReference type="Pfam" id="PF00005">
    <property type="entry name" value="ABC_tran"/>
    <property type="match status" value="2"/>
</dbReference>
<dbReference type="SMART" id="SM00382">
    <property type="entry name" value="AAA"/>
    <property type="match status" value="2"/>
</dbReference>
<dbReference type="SUPFAM" id="SSF90123">
    <property type="entry name" value="ABC transporter transmembrane region"/>
    <property type="match status" value="2"/>
</dbReference>
<dbReference type="SUPFAM" id="SSF52540">
    <property type="entry name" value="P-loop containing nucleoside triphosphate hydrolases"/>
    <property type="match status" value="2"/>
</dbReference>
<dbReference type="PROSITE" id="PS50929">
    <property type="entry name" value="ABC_TM1F"/>
    <property type="match status" value="2"/>
</dbReference>
<dbReference type="PROSITE" id="PS00211">
    <property type="entry name" value="ABC_TRANSPORTER_1"/>
    <property type="match status" value="1"/>
</dbReference>
<dbReference type="PROSITE" id="PS50893">
    <property type="entry name" value="ABC_TRANSPORTER_2"/>
    <property type="match status" value="2"/>
</dbReference>
<evidence type="ECO:0000250" key="1"/>
<evidence type="ECO:0000255" key="2">
    <source>
        <dbReference type="PROSITE-ProRule" id="PRU00434"/>
    </source>
</evidence>
<evidence type="ECO:0000255" key="3">
    <source>
        <dbReference type="PROSITE-ProRule" id="PRU00441"/>
    </source>
</evidence>
<evidence type="ECO:0000305" key="4"/>
<name>AB15C_ARATH</name>